<organism>
    <name type="scientific">Danio rerio</name>
    <name type="common">Zebrafish</name>
    <name type="synonym">Brachydanio rerio</name>
    <dbReference type="NCBI Taxonomy" id="7955"/>
    <lineage>
        <taxon>Eukaryota</taxon>
        <taxon>Metazoa</taxon>
        <taxon>Chordata</taxon>
        <taxon>Craniata</taxon>
        <taxon>Vertebrata</taxon>
        <taxon>Euteleostomi</taxon>
        <taxon>Actinopterygii</taxon>
        <taxon>Neopterygii</taxon>
        <taxon>Teleostei</taxon>
        <taxon>Ostariophysi</taxon>
        <taxon>Cypriniformes</taxon>
        <taxon>Danionidae</taxon>
        <taxon>Danioninae</taxon>
        <taxon>Danio</taxon>
    </lineage>
</organism>
<feature type="chain" id="PRO_0000048887" description="Homeobox protein goosecoid">
    <location>
        <begin position="1"/>
        <end position="240"/>
    </location>
</feature>
<feature type="DNA-binding region" description="Homeobox" evidence="1">
    <location>
        <begin position="146"/>
        <end position="205"/>
    </location>
</feature>
<feature type="region of interest" description="Disordered" evidence="2">
    <location>
        <begin position="199"/>
        <end position="240"/>
    </location>
</feature>
<feature type="compositionally biased region" description="Basic and acidic residues" evidence="2">
    <location>
        <begin position="225"/>
        <end position="240"/>
    </location>
</feature>
<sequence length="240" mass="26981">MPAGMFSIDSILAGRPSCKDSVLLHRNAPVVFSNLTESLYTAAGDFNGLYSHTGPPAPNLQSVNGRIGYNNYYYGQLHVQGPTGPACCGAIPTLGSQQCPCIPTGYDSAGSVLISPVPHQMMSYMNVGTLSRTELQLLNQLHCRRKRRHRTIFTDEQLEALENLFQETKYPDVGTREQLARKVHLREEKVEVWFKNRRAKWRRQKRSSSEESENSQKWNKSTKTTSEKIEEGKSDVDSDS</sequence>
<accession>P53544</accession>
<name>GSC_DANRE</name>
<comment type="subcellular location">
    <subcellularLocation>
        <location>Nucleus</location>
    </subcellularLocation>
</comment>
<comment type="developmental stage">
    <text evidence="3 4">Maternally expressed in oocytes and after fertilization, expressed in early embryos (PubMed:8104775). Expression is activated at, or just after the mid-blastula stage, about 2 hours before the appearance of the embryonic shield (PubMed:8104775). In early gastrulation, expression marks the anterior shield and by late gastrulation, expression is restricted to the rostral crescent and medial strip (PubMed:8104775). Expressed in the presumptive prechordal plate at 7 hpf (PubMed:15162505). Expression then declines and is lost by 15 hours post-fertilization (PubMed:8104775).</text>
</comment>
<comment type="similarity">
    <text evidence="5">Belongs to the paired homeobox family. Bicoid subfamily.</text>
</comment>
<gene>
    <name type="primary">gsc</name>
</gene>
<protein>
    <recommendedName>
        <fullName>Homeobox protein goosecoid</fullName>
    </recommendedName>
    <alternativeName>
        <fullName>ZGSC</fullName>
    </alternativeName>
</protein>
<evidence type="ECO:0000255" key="1">
    <source>
        <dbReference type="PROSITE-ProRule" id="PRU00108"/>
    </source>
</evidence>
<evidence type="ECO:0000256" key="2">
    <source>
        <dbReference type="SAM" id="MobiDB-lite"/>
    </source>
</evidence>
<evidence type="ECO:0000269" key="3">
    <source>
    </source>
</evidence>
<evidence type="ECO:0000269" key="4">
    <source>
    </source>
</evidence>
<evidence type="ECO:0000305" key="5"/>
<proteinExistence type="evidence at transcript level"/>
<dbReference type="EMBL" id="L03394">
    <property type="protein sequence ID" value="AAA50028.1"/>
    <property type="molecule type" value="mRNA"/>
</dbReference>
<dbReference type="EMBL" id="L03395">
    <property type="protein sequence ID" value="AAA50030.1"/>
    <property type="molecule type" value="mRNA"/>
</dbReference>
<dbReference type="EMBL" id="BC081381">
    <property type="protein sequence ID" value="AAH81381.1"/>
    <property type="molecule type" value="mRNA"/>
</dbReference>
<dbReference type="RefSeq" id="NP_571092.1">
    <property type="nucleotide sequence ID" value="NM_131017.1"/>
</dbReference>
<dbReference type="SMR" id="P53544"/>
<dbReference type="FunCoup" id="P53544">
    <property type="interactions" value="1182"/>
</dbReference>
<dbReference type="STRING" id="7955.ENSDARP00000076522"/>
<dbReference type="PaxDb" id="7955-ENSDARP00000076522"/>
<dbReference type="Ensembl" id="ENSDART00000189469">
    <property type="protein sequence ID" value="ENSDARP00000147175"/>
    <property type="gene ID" value="ENSDARG00000111184"/>
</dbReference>
<dbReference type="GeneID" id="30212"/>
<dbReference type="KEGG" id="dre:30212"/>
<dbReference type="AGR" id="ZFIN:ZDB-GENE-980528-2060"/>
<dbReference type="CTD" id="145258"/>
<dbReference type="ZFIN" id="ZDB-GENE-980528-2060">
    <property type="gene designation" value="gsc"/>
</dbReference>
<dbReference type="eggNOG" id="KOG0490">
    <property type="taxonomic scope" value="Eukaryota"/>
</dbReference>
<dbReference type="InParanoid" id="P53544"/>
<dbReference type="OMA" id="QCSCVPA"/>
<dbReference type="OrthoDB" id="6159439at2759"/>
<dbReference type="PRO" id="PR:P53544"/>
<dbReference type="Proteomes" id="UP000000437">
    <property type="component" value="Alternate scaffold 17"/>
</dbReference>
<dbReference type="Proteomes" id="UP000000437">
    <property type="component" value="Chromosome 17"/>
</dbReference>
<dbReference type="GO" id="GO:0005634">
    <property type="term" value="C:nucleus"/>
    <property type="evidence" value="ECO:0000318"/>
    <property type="project" value="GO_Central"/>
</dbReference>
<dbReference type="GO" id="GO:0000981">
    <property type="term" value="F:DNA-binding transcription factor activity, RNA polymerase II-specific"/>
    <property type="evidence" value="ECO:0000318"/>
    <property type="project" value="GO_Central"/>
</dbReference>
<dbReference type="GO" id="GO:0000978">
    <property type="term" value="F:RNA polymerase II cis-regulatory region sequence-specific DNA binding"/>
    <property type="evidence" value="ECO:0000318"/>
    <property type="project" value="GO_Central"/>
</dbReference>
<dbReference type="GO" id="GO:0009948">
    <property type="term" value="P:anterior/posterior axis specification"/>
    <property type="evidence" value="ECO:0000314"/>
    <property type="project" value="ZFIN"/>
</dbReference>
<dbReference type="GO" id="GO:0007420">
    <property type="term" value="P:brain development"/>
    <property type="evidence" value="ECO:0000316"/>
    <property type="project" value="ZFIN"/>
</dbReference>
<dbReference type="GO" id="GO:0009950">
    <property type="term" value="P:dorsal/ventral axis specification"/>
    <property type="evidence" value="ECO:0000270"/>
    <property type="project" value="ZFIN"/>
</dbReference>
<dbReference type="GO" id="GO:0009953">
    <property type="term" value="P:dorsal/ventral pattern formation"/>
    <property type="evidence" value="ECO:0000314"/>
    <property type="project" value="ZFIN"/>
</dbReference>
<dbReference type="GO" id="GO:0021999">
    <property type="term" value="P:neural plate anterior/posterior regionalization"/>
    <property type="evidence" value="ECO:0000316"/>
    <property type="project" value="ZFIN"/>
</dbReference>
<dbReference type="GO" id="GO:0060234">
    <property type="term" value="P:neuroblast delamination"/>
    <property type="evidence" value="ECO:0000315"/>
    <property type="project" value="ZFIN"/>
</dbReference>
<dbReference type="GO" id="GO:0071599">
    <property type="term" value="P:otic vesicle development"/>
    <property type="evidence" value="ECO:0000315"/>
    <property type="project" value="ZFIN"/>
</dbReference>
<dbReference type="GO" id="GO:0010717">
    <property type="term" value="P:regulation of epithelial to mesenchymal transition"/>
    <property type="evidence" value="ECO:0000315"/>
    <property type="project" value="ZFIN"/>
</dbReference>
<dbReference type="GO" id="GO:0006357">
    <property type="term" value="P:regulation of transcription by RNA polymerase II"/>
    <property type="evidence" value="ECO:0000318"/>
    <property type="project" value="GO_Central"/>
</dbReference>
<dbReference type="CDD" id="cd00086">
    <property type="entry name" value="homeodomain"/>
    <property type="match status" value="1"/>
</dbReference>
<dbReference type="FunFam" id="1.10.10.60:FF:000210">
    <property type="entry name" value="homeobox protein goosecoid"/>
    <property type="match status" value="1"/>
</dbReference>
<dbReference type="Gene3D" id="1.10.10.60">
    <property type="entry name" value="Homeodomain-like"/>
    <property type="match status" value="1"/>
</dbReference>
<dbReference type="InterPro" id="IPR051440">
    <property type="entry name" value="Goosecoid-like_HB"/>
</dbReference>
<dbReference type="InterPro" id="IPR001356">
    <property type="entry name" value="HD"/>
</dbReference>
<dbReference type="InterPro" id="IPR017970">
    <property type="entry name" value="Homeobox_CS"/>
</dbReference>
<dbReference type="InterPro" id="IPR009057">
    <property type="entry name" value="Homeodomain-like_sf"/>
</dbReference>
<dbReference type="PANTHER" id="PTHR46643:SF2">
    <property type="entry name" value="HOMEOBOX PROTEIN GOOSECOID"/>
    <property type="match status" value="1"/>
</dbReference>
<dbReference type="PANTHER" id="PTHR46643">
    <property type="entry name" value="HOMEOBOX PROTEIN GOOSECOID-RELATED"/>
    <property type="match status" value="1"/>
</dbReference>
<dbReference type="Pfam" id="PF00046">
    <property type="entry name" value="Homeodomain"/>
    <property type="match status" value="1"/>
</dbReference>
<dbReference type="SMART" id="SM00389">
    <property type="entry name" value="HOX"/>
    <property type="match status" value="1"/>
</dbReference>
<dbReference type="SUPFAM" id="SSF46689">
    <property type="entry name" value="Homeodomain-like"/>
    <property type="match status" value="1"/>
</dbReference>
<dbReference type="PROSITE" id="PS00027">
    <property type="entry name" value="HOMEOBOX_1"/>
    <property type="match status" value="1"/>
</dbReference>
<dbReference type="PROSITE" id="PS50071">
    <property type="entry name" value="HOMEOBOX_2"/>
    <property type="match status" value="1"/>
</dbReference>
<reference key="1">
    <citation type="journal article" date="1993" name="Development">
        <title>Lithium perturbation and goosecoid expression identify a dorsal specification pathway in the pregastrula zebrafish.</title>
        <authorList>
            <person name="Stachel S.E."/>
            <person name="Grunwald D.J."/>
            <person name="Myers P.Z."/>
        </authorList>
    </citation>
    <scope>NUCLEOTIDE SEQUENCE [MRNA]</scope>
    <scope>DEVELOPMENTAL STAGE</scope>
    <source>
        <tissue>Embryo</tissue>
    </source>
</reference>
<reference key="2">
    <citation type="submission" date="2004-09" db="EMBL/GenBank/DDBJ databases">
        <authorList>
            <consortium name="NIH - Zebrafish Gene Collection (ZGC) project"/>
        </authorList>
    </citation>
    <scope>NUCLEOTIDE SEQUENCE [LARGE SCALE MRNA]</scope>
    <source>
        <tissue>Embryo</tissue>
    </source>
</reference>
<reference key="3">
    <citation type="journal article" date="2004" name="Dev. Dyn.">
        <title>E-cadherin regulates cell movements and tissue formation in early zebrafish embryos.</title>
        <authorList>
            <person name="Babb S.G."/>
            <person name="Marrs J.A."/>
        </authorList>
    </citation>
    <scope>DEVELOPMENTAL STAGE</scope>
</reference>
<keyword id="KW-0217">Developmental protein</keyword>
<keyword id="KW-0238">DNA-binding</keyword>
<keyword id="KW-0371">Homeobox</keyword>
<keyword id="KW-0539">Nucleus</keyword>
<keyword id="KW-1185">Reference proteome</keyword>